<dbReference type="EC" id="1.6.5.2" evidence="1"/>
<dbReference type="EMBL" id="CU928164">
    <property type="protein sequence ID" value="CAR18277.1"/>
    <property type="molecule type" value="Genomic_DNA"/>
</dbReference>
<dbReference type="RefSeq" id="YP_002408113.1">
    <property type="nucleotide sequence ID" value="NC_011750.1"/>
</dbReference>
<dbReference type="SMR" id="B7NLC1"/>
<dbReference type="STRING" id="585057.ECIAI39_2150"/>
<dbReference type="KEGG" id="ect:ECIAI39_2150"/>
<dbReference type="PATRIC" id="fig|585057.6.peg.2239"/>
<dbReference type="HOGENOM" id="CLU_051402_0_2_6"/>
<dbReference type="Proteomes" id="UP000000749">
    <property type="component" value="Chromosome"/>
</dbReference>
<dbReference type="GO" id="GO:0016020">
    <property type="term" value="C:membrane"/>
    <property type="evidence" value="ECO:0007669"/>
    <property type="project" value="TreeGrafter"/>
</dbReference>
<dbReference type="GO" id="GO:0050660">
    <property type="term" value="F:flavin adenine dinucleotide binding"/>
    <property type="evidence" value="ECO:0007669"/>
    <property type="project" value="UniProtKB-UniRule"/>
</dbReference>
<dbReference type="GO" id="GO:0010181">
    <property type="term" value="F:FMN binding"/>
    <property type="evidence" value="ECO:0007669"/>
    <property type="project" value="InterPro"/>
</dbReference>
<dbReference type="GO" id="GO:0051287">
    <property type="term" value="F:NAD binding"/>
    <property type="evidence" value="ECO:0007669"/>
    <property type="project" value="UniProtKB-UniRule"/>
</dbReference>
<dbReference type="GO" id="GO:0050136">
    <property type="term" value="F:NADH:ubiquinone reductase (non-electrogenic) activity"/>
    <property type="evidence" value="ECO:0007669"/>
    <property type="project" value="RHEA"/>
</dbReference>
<dbReference type="GO" id="GO:0050661">
    <property type="term" value="F:NADP binding"/>
    <property type="evidence" value="ECO:0007669"/>
    <property type="project" value="UniProtKB-UniRule"/>
</dbReference>
<dbReference type="GO" id="GO:0008753">
    <property type="term" value="F:NADPH dehydrogenase (quinone) activity"/>
    <property type="evidence" value="ECO:0007669"/>
    <property type="project" value="RHEA"/>
</dbReference>
<dbReference type="FunFam" id="3.40.50.360:FF:000004">
    <property type="entry name" value="NAD(P)H dehydrogenase (quinone)"/>
    <property type="match status" value="1"/>
</dbReference>
<dbReference type="Gene3D" id="3.40.50.360">
    <property type="match status" value="1"/>
</dbReference>
<dbReference type="HAMAP" id="MF_01017">
    <property type="entry name" value="NQOR"/>
    <property type="match status" value="1"/>
</dbReference>
<dbReference type="InterPro" id="IPR008254">
    <property type="entry name" value="Flavodoxin/NO_synth"/>
</dbReference>
<dbReference type="InterPro" id="IPR029039">
    <property type="entry name" value="Flavoprotein-like_sf"/>
</dbReference>
<dbReference type="InterPro" id="IPR010089">
    <property type="entry name" value="Flavoprotein_WrbA-like"/>
</dbReference>
<dbReference type="InterPro" id="IPR005025">
    <property type="entry name" value="FMN_Rdtase-like_dom"/>
</dbReference>
<dbReference type="InterPro" id="IPR037513">
    <property type="entry name" value="NQO"/>
</dbReference>
<dbReference type="NCBIfam" id="TIGR01755">
    <property type="entry name" value="flav_wrbA"/>
    <property type="match status" value="1"/>
</dbReference>
<dbReference type="NCBIfam" id="NF002999">
    <property type="entry name" value="PRK03767.1"/>
    <property type="match status" value="1"/>
</dbReference>
<dbReference type="PANTHER" id="PTHR30546">
    <property type="entry name" value="FLAVODOXIN-RELATED PROTEIN WRBA-RELATED"/>
    <property type="match status" value="1"/>
</dbReference>
<dbReference type="PANTHER" id="PTHR30546:SF23">
    <property type="entry name" value="FLAVOPROTEIN-LIKE PROTEIN YCP4-RELATED"/>
    <property type="match status" value="1"/>
</dbReference>
<dbReference type="Pfam" id="PF03358">
    <property type="entry name" value="FMN_red"/>
    <property type="match status" value="1"/>
</dbReference>
<dbReference type="SUPFAM" id="SSF52218">
    <property type="entry name" value="Flavoproteins"/>
    <property type="match status" value="1"/>
</dbReference>
<dbReference type="PROSITE" id="PS50902">
    <property type="entry name" value="FLAVODOXIN_LIKE"/>
    <property type="match status" value="1"/>
</dbReference>
<gene>
    <name type="ordered locus">ECIAI39_2150</name>
</gene>
<evidence type="ECO:0000255" key="1">
    <source>
        <dbReference type="HAMAP-Rule" id="MF_01017"/>
    </source>
</evidence>
<feature type="chain" id="PRO_1000200628" description="NAD(P)H dehydrogenase (quinone)">
    <location>
        <begin position="1"/>
        <end position="198"/>
    </location>
</feature>
<feature type="domain" description="Flavodoxin-like" evidence="1">
    <location>
        <begin position="4"/>
        <end position="189"/>
    </location>
</feature>
<feature type="binding site" evidence="1">
    <location>
        <begin position="10"/>
        <end position="15"/>
    </location>
    <ligand>
        <name>FMN</name>
        <dbReference type="ChEBI" id="CHEBI:58210"/>
    </ligand>
</feature>
<feature type="binding site" evidence="1">
    <location>
        <position position="12"/>
    </location>
    <ligand>
        <name>NAD(+)</name>
        <dbReference type="ChEBI" id="CHEBI:57540"/>
    </ligand>
</feature>
<feature type="binding site" evidence="1">
    <location>
        <begin position="78"/>
        <end position="80"/>
    </location>
    <ligand>
        <name>FMN</name>
        <dbReference type="ChEBI" id="CHEBI:58210"/>
    </ligand>
</feature>
<feature type="binding site" evidence="1">
    <location>
        <position position="98"/>
    </location>
    <ligand>
        <name>substrate</name>
    </ligand>
</feature>
<feature type="binding site" evidence="1">
    <location>
        <begin position="113"/>
        <end position="118"/>
    </location>
    <ligand>
        <name>FMN</name>
        <dbReference type="ChEBI" id="CHEBI:58210"/>
    </ligand>
</feature>
<feature type="binding site" evidence="1">
    <location>
        <position position="133"/>
    </location>
    <ligand>
        <name>FMN</name>
        <dbReference type="ChEBI" id="CHEBI:58210"/>
    </ligand>
</feature>
<keyword id="KW-0285">Flavoprotein</keyword>
<keyword id="KW-0288">FMN</keyword>
<keyword id="KW-0520">NAD</keyword>
<keyword id="KW-0521">NADP</keyword>
<keyword id="KW-0547">Nucleotide-binding</keyword>
<keyword id="KW-0560">Oxidoreductase</keyword>
<organism>
    <name type="scientific">Escherichia coli O7:K1 (strain IAI39 / ExPEC)</name>
    <dbReference type="NCBI Taxonomy" id="585057"/>
    <lineage>
        <taxon>Bacteria</taxon>
        <taxon>Pseudomonadati</taxon>
        <taxon>Pseudomonadota</taxon>
        <taxon>Gammaproteobacteria</taxon>
        <taxon>Enterobacterales</taxon>
        <taxon>Enterobacteriaceae</taxon>
        <taxon>Escherichia</taxon>
    </lineage>
</organism>
<accession>B7NLC1</accession>
<comment type="catalytic activity">
    <reaction evidence="1">
        <text>a quinone + NADH + H(+) = a quinol + NAD(+)</text>
        <dbReference type="Rhea" id="RHEA:46160"/>
        <dbReference type="ChEBI" id="CHEBI:15378"/>
        <dbReference type="ChEBI" id="CHEBI:24646"/>
        <dbReference type="ChEBI" id="CHEBI:57540"/>
        <dbReference type="ChEBI" id="CHEBI:57945"/>
        <dbReference type="ChEBI" id="CHEBI:132124"/>
        <dbReference type="EC" id="1.6.5.2"/>
    </reaction>
</comment>
<comment type="catalytic activity">
    <reaction evidence="1">
        <text>a quinone + NADPH + H(+) = a quinol + NADP(+)</text>
        <dbReference type="Rhea" id="RHEA:46164"/>
        <dbReference type="ChEBI" id="CHEBI:15378"/>
        <dbReference type="ChEBI" id="CHEBI:24646"/>
        <dbReference type="ChEBI" id="CHEBI:57783"/>
        <dbReference type="ChEBI" id="CHEBI:58349"/>
        <dbReference type="ChEBI" id="CHEBI:132124"/>
        <dbReference type="EC" id="1.6.5.2"/>
    </reaction>
</comment>
<comment type="cofactor">
    <cofactor evidence="1">
        <name>FMN</name>
        <dbReference type="ChEBI" id="CHEBI:58210"/>
    </cofactor>
    <text evidence="1">Binds 1 FMN per monomer.</text>
</comment>
<comment type="similarity">
    <text evidence="1">Belongs to the WrbA family.</text>
</comment>
<reference key="1">
    <citation type="journal article" date="2009" name="PLoS Genet.">
        <title>Organised genome dynamics in the Escherichia coli species results in highly diverse adaptive paths.</title>
        <authorList>
            <person name="Touchon M."/>
            <person name="Hoede C."/>
            <person name="Tenaillon O."/>
            <person name="Barbe V."/>
            <person name="Baeriswyl S."/>
            <person name="Bidet P."/>
            <person name="Bingen E."/>
            <person name="Bonacorsi S."/>
            <person name="Bouchier C."/>
            <person name="Bouvet O."/>
            <person name="Calteau A."/>
            <person name="Chiapello H."/>
            <person name="Clermont O."/>
            <person name="Cruveiller S."/>
            <person name="Danchin A."/>
            <person name="Diard M."/>
            <person name="Dossat C."/>
            <person name="Karoui M.E."/>
            <person name="Frapy E."/>
            <person name="Garry L."/>
            <person name="Ghigo J.M."/>
            <person name="Gilles A.M."/>
            <person name="Johnson J."/>
            <person name="Le Bouguenec C."/>
            <person name="Lescat M."/>
            <person name="Mangenot S."/>
            <person name="Martinez-Jehanne V."/>
            <person name="Matic I."/>
            <person name="Nassif X."/>
            <person name="Oztas S."/>
            <person name="Petit M.A."/>
            <person name="Pichon C."/>
            <person name="Rouy Z."/>
            <person name="Ruf C.S."/>
            <person name="Schneider D."/>
            <person name="Tourret J."/>
            <person name="Vacherie B."/>
            <person name="Vallenet D."/>
            <person name="Medigue C."/>
            <person name="Rocha E.P.C."/>
            <person name="Denamur E."/>
        </authorList>
    </citation>
    <scope>NUCLEOTIDE SEQUENCE [LARGE SCALE GENOMIC DNA]</scope>
    <source>
        <strain>IAI39 / ExPEC</strain>
    </source>
</reference>
<protein>
    <recommendedName>
        <fullName evidence="1">NAD(P)H dehydrogenase (quinone)</fullName>
        <ecNumber evidence="1">1.6.5.2</ecNumber>
    </recommendedName>
    <alternativeName>
        <fullName>Flavoprotein WrbA</fullName>
    </alternativeName>
    <alternativeName>
        <fullName evidence="1">NAD(P)H:quinone oxidoreductase</fullName>
        <shortName evidence="1">NQO</shortName>
    </alternativeName>
</protein>
<name>NQOR_ECO7I</name>
<proteinExistence type="inferred from homology"/>
<sequence length="198" mass="20846">MAKVLVLYYSMYGHIETMARAVAEGASKVDGAEVVVKRVPETMPPQLFEKAGGKTQTAPVATPQELADYDAIIFGTPTRFGNMSGQMRTFLDQTGGLWASGALYGKLASVFSSTGTGGGQEQTITSTWTTLAHHGMVIVPIGYAAQELFDVSQVRGGTPYGATTIAGGDGSRQPSQEELSIARYQGEYVAGLAVKLNG</sequence>